<reference key="1">
    <citation type="submission" date="2005-07" db="EMBL/GenBank/DDBJ databases">
        <title>Complete sequence of Synechococcus sp. CC9605.</title>
        <authorList>
            <consortium name="US DOE Joint Genome Institute"/>
            <person name="Copeland A."/>
            <person name="Lucas S."/>
            <person name="Lapidus A."/>
            <person name="Barry K."/>
            <person name="Detter J.C."/>
            <person name="Glavina T."/>
            <person name="Hammon N."/>
            <person name="Israni S."/>
            <person name="Pitluck S."/>
            <person name="Schmutz J."/>
            <person name="Martinez M."/>
            <person name="Larimer F."/>
            <person name="Land M."/>
            <person name="Kyrpides N."/>
            <person name="Ivanova N."/>
            <person name="Richardson P."/>
        </authorList>
    </citation>
    <scope>NUCLEOTIDE SEQUENCE [LARGE SCALE GENOMIC DNA]</scope>
    <source>
        <strain>CC9605</strain>
    </source>
</reference>
<dbReference type="EMBL" id="CP000110">
    <property type="protein sequence ID" value="ABB33974.1"/>
    <property type="molecule type" value="Genomic_DNA"/>
</dbReference>
<dbReference type="RefSeq" id="WP_006852026.1">
    <property type="nucleotide sequence ID" value="NC_007516.1"/>
</dbReference>
<dbReference type="SMR" id="Q3AN58"/>
<dbReference type="STRING" id="110662.Syncc9605_0198"/>
<dbReference type="KEGG" id="syd:Syncc9605_0198"/>
<dbReference type="eggNOG" id="ENOG5033AKP">
    <property type="taxonomic scope" value="Bacteria"/>
</dbReference>
<dbReference type="HOGENOM" id="CLU_214425_0_0_3"/>
<dbReference type="GO" id="GO:0009539">
    <property type="term" value="C:photosystem II reaction center"/>
    <property type="evidence" value="ECO:0007669"/>
    <property type="project" value="InterPro"/>
</dbReference>
<dbReference type="GO" id="GO:0031676">
    <property type="term" value="C:plasma membrane-derived thylakoid membrane"/>
    <property type="evidence" value="ECO:0007669"/>
    <property type="project" value="UniProtKB-SubCell"/>
</dbReference>
<dbReference type="GO" id="GO:0015979">
    <property type="term" value="P:photosynthesis"/>
    <property type="evidence" value="ECO:0007669"/>
    <property type="project" value="UniProtKB-UniRule"/>
</dbReference>
<dbReference type="HAMAP" id="MF_01317">
    <property type="entry name" value="PSII_PsbL"/>
    <property type="match status" value="1"/>
</dbReference>
<dbReference type="InterPro" id="IPR003372">
    <property type="entry name" value="PSII_PsbL"/>
</dbReference>
<dbReference type="InterPro" id="IPR037266">
    <property type="entry name" value="PSII_PsbL_sf"/>
</dbReference>
<dbReference type="NCBIfam" id="NF001972">
    <property type="entry name" value="PRK00753.1"/>
    <property type="match status" value="1"/>
</dbReference>
<dbReference type="Pfam" id="PF02419">
    <property type="entry name" value="PsbL"/>
    <property type="match status" value="1"/>
</dbReference>
<dbReference type="SUPFAM" id="SSF161017">
    <property type="entry name" value="Photosystem II reaction center protein L, PsbL"/>
    <property type="match status" value="1"/>
</dbReference>
<name>PSBL_SYNSC</name>
<feature type="chain" id="PRO_0000306212" description="Photosystem II reaction center protein L">
    <location>
        <begin position="1"/>
        <end position="39"/>
    </location>
</feature>
<feature type="transmembrane region" description="Helical" evidence="1">
    <location>
        <begin position="18"/>
        <end position="38"/>
    </location>
</feature>
<accession>Q3AN58</accession>
<organism>
    <name type="scientific">Synechococcus sp. (strain CC9605)</name>
    <dbReference type="NCBI Taxonomy" id="110662"/>
    <lineage>
        <taxon>Bacteria</taxon>
        <taxon>Bacillati</taxon>
        <taxon>Cyanobacteriota</taxon>
        <taxon>Cyanophyceae</taxon>
        <taxon>Synechococcales</taxon>
        <taxon>Synechococcaceae</taxon>
        <taxon>Synechococcus</taxon>
    </lineage>
</organism>
<evidence type="ECO:0000255" key="1">
    <source>
        <dbReference type="HAMAP-Rule" id="MF_01317"/>
    </source>
</evidence>
<protein>
    <recommendedName>
        <fullName evidence="1">Photosystem II reaction center protein L</fullName>
        <shortName evidence="1">PSII-L</shortName>
    </recommendedName>
</protein>
<gene>
    <name evidence="1" type="primary">psbL</name>
    <name type="ordered locus">Syncc9605_0198</name>
</gene>
<proteinExistence type="inferred from homology"/>
<keyword id="KW-0472">Membrane</keyword>
<keyword id="KW-0602">Photosynthesis</keyword>
<keyword id="KW-0604">Photosystem II</keyword>
<keyword id="KW-0674">Reaction center</keyword>
<keyword id="KW-0793">Thylakoid</keyword>
<keyword id="KW-0812">Transmembrane</keyword>
<keyword id="KW-1133">Transmembrane helix</keyword>
<sequence length="39" mass="4508">MERNPNPNNLPVELNRTSLYLGLLFVFVTGVLMSSYFFN</sequence>
<comment type="function">
    <text evidence="1">One of the components of the core complex of photosystem II (PSII). PSII is a light-driven water:plastoquinone oxidoreductase that uses light energy to abstract electrons from H(2)O, generating O(2) and a proton gradient subsequently used for ATP formation. It consists of a core antenna complex that captures photons, and an electron transfer chain that converts photonic excitation into a charge separation. This subunit is found at the monomer-monomer interface and is required for correct PSII assembly and/or dimerization.</text>
</comment>
<comment type="subunit">
    <text evidence="1">PSII is composed of 1 copy each of membrane proteins PsbA, PsbB, PsbC, PsbD, PsbE, PsbF, PsbH, PsbI, PsbJ, PsbK, PsbL, PsbM, PsbT, PsbX, PsbY, PsbZ, Psb30/Ycf12, peripheral proteins PsbO, CyanoQ (PsbQ), PsbU, PsbV and a large number of cofactors. It forms dimeric complexes.</text>
</comment>
<comment type="subcellular location">
    <subcellularLocation>
        <location evidence="1">Cellular thylakoid membrane</location>
        <topology evidence="1">Single-pass membrane protein</topology>
    </subcellularLocation>
</comment>
<comment type="similarity">
    <text evidence="1">Belongs to the PsbL family.</text>
</comment>